<keyword id="KW-0027">Amidation</keyword>
<keyword id="KW-0878">Amphibian defense peptide</keyword>
<keyword id="KW-0929">Antimicrobial</keyword>
<keyword id="KW-0903">Direct protein sequencing</keyword>
<keyword id="KW-0964">Secreted</keyword>
<organism>
    <name type="scientific">Phasmahyla jandaia</name>
    <name type="common">Jandaia leaf frog</name>
    <name type="synonym">Phyllomedusa jandaia</name>
    <dbReference type="NCBI Taxonomy" id="762504"/>
    <lineage>
        <taxon>Eukaryota</taxon>
        <taxon>Metazoa</taxon>
        <taxon>Chordata</taxon>
        <taxon>Craniata</taxon>
        <taxon>Vertebrata</taxon>
        <taxon>Euteleostomi</taxon>
        <taxon>Amphibia</taxon>
        <taxon>Batrachia</taxon>
        <taxon>Anura</taxon>
        <taxon>Neobatrachia</taxon>
        <taxon>Hyloidea</taxon>
        <taxon>Hylidae</taxon>
        <taxon>Phyllomedusinae</taxon>
        <taxon>Phasmahyla</taxon>
    </lineage>
</organism>
<dbReference type="GO" id="GO:0005576">
    <property type="term" value="C:extracellular region"/>
    <property type="evidence" value="ECO:0007669"/>
    <property type="project" value="UniProtKB-SubCell"/>
</dbReference>
<dbReference type="GO" id="GO:0006952">
    <property type="term" value="P:defense response"/>
    <property type="evidence" value="ECO:0007669"/>
    <property type="project" value="UniProtKB-KW"/>
</dbReference>
<comment type="function">
    <text evidence="1">Has antimicrobial activity.</text>
</comment>
<comment type="subcellular location">
    <subcellularLocation>
        <location evidence="3">Secreted</location>
    </subcellularLocation>
</comment>
<comment type="tissue specificity">
    <text evidence="3">Expressed by the skin glands.</text>
</comment>
<comment type="mass spectrometry"/>
<comment type="similarity">
    <text evidence="2">Belongs to the frog skin active peptide (FSAP) family. Phylloseptin subfamily.</text>
</comment>
<proteinExistence type="evidence at protein level"/>
<protein>
    <recommendedName>
        <fullName evidence="4">Phylloseptin-J6</fullName>
        <shortName evidence="4">PLS-J6</shortName>
        <shortName>PS-J6</shortName>
    </recommendedName>
</protein>
<accession>P86619</accession>
<name>PLS6_PHAJA</name>
<evidence type="ECO:0000250" key="1">
    <source>
        <dbReference type="UniProtKB" id="P84572"/>
    </source>
</evidence>
<evidence type="ECO:0000255" key="2"/>
<evidence type="ECO:0000269" key="3">
    <source>
    </source>
</evidence>
<evidence type="ECO:0000303" key="4">
    <source>
    </source>
</evidence>
<evidence type="ECO:0000305" key="5"/>
<feature type="peptide" id="PRO_0000404625" description="Phylloseptin-J6" evidence="1 5">
    <location>
        <begin position="1"/>
        <end position="19"/>
    </location>
</feature>
<feature type="modified residue" description="Leucine amide" evidence="3">
    <location>
        <position position="19"/>
    </location>
</feature>
<feature type="unsure residue" description="L or I" evidence="3">
    <location>
        <position position="2"/>
    </location>
</feature>
<feature type="unsure residue" description="L or I" evidence="3">
    <location>
        <position position="4"/>
    </location>
</feature>
<feature type="unsure residue" description="I or L" evidence="3">
    <location>
        <position position="5"/>
    </location>
</feature>
<feature type="unsure residue" description="I or L" evidence="3">
    <location>
        <position position="9"/>
    </location>
</feature>
<feature type="unsure residue" description="I or L" evidence="3">
    <location>
        <position position="12"/>
    </location>
</feature>
<feature type="unsure residue" description="I or L" evidence="3">
    <location>
        <position position="15"/>
    </location>
</feature>
<feature type="unsure residue" description="L or I" evidence="3">
    <location>
        <position position="19"/>
    </location>
</feature>
<reference evidence="5" key="1">
    <citation type="journal article" date="2011" name="Toxicon">
        <title>Peptidomic dissection of the skin secretion of Phasmahyla jandaia (Bokermann and Sazima, 1978) (Anura, Hylidae, Phyllomedusinae).</title>
        <authorList>
            <person name="Rates B."/>
            <person name="Silva L.P."/>
            <person name="Ireno I.C."/>
            <person name="Leite F.S."/>
            <person name="Borges M.H."/>
            <person name="Bloch C. Jr."/>
            <person name="De Lima M.E."/>
            <person name="Pimenta A.M."/>
        </authorList>
    </citation>
    <scope>PROTEIN SEQUENCE</scope>
    <scope>SUBCELLULAR LOCATION</scope>
    <scope>TISSUE SPECIFICITY</scope>
    <scope>MASS SPECTROMETRY</scope>
    <scope>AMIDATION AT LEU-19</scope>
    <source>
        <tissue evidence="3">Skin secretion</tissue>
    </source>
</reference>
<sequence>FLSLIPHAISAISAIANHL</sequence>